<dbReference type="EMBL" id="CP000250">
    <property type="protein sequence ID" value="ABD07453.1"/>
    <property type="molecule type" value="Genomic_DNA"/>
</dbReference>
<dbReference type="RefSeq" id="WP_011441638.1">
    <property type="nucleotide sequence ID" value="NC_007778.1"/>
</dbReference>
<dbReference type="SMR" id="Q2IWF7"/>
<dbReference type="STRING" id="316058.RPB_2751"/>
<dbReference type="KEGG" id="rpb:RPB_2751"/>
<dbReference type="eggNOG" id="COG0232">
    <property type="taxonomic scope" value="Bacteria"/>
</dbReference>
<dbReference type="HOGENOM" id="CLU_028163_1_0_5"/>
<dbReference type="OrthoDB" id="9803619at2"/>
<dbReference type="Proteomes" id="UP000008809">
    <property type="component" value="Chromosome"/>
</dbReference>
<dbReference type="GO" id="GO:0008832">
    <property type="term" value="F:dGTPase activity"/>
    <property type="evidence" value="ECO:0007669"/>
    <property type="project" value="TreeGrafter"/>
</dbReference>
<dbReference type="GO" id="GO:0006203">
    <property type="term" value="P:dGTP catabolic process"/>
    <property type="evidence" value="ECO:0007669"/>
    <property type="project" value="TreeGrafter"/>
</dbReference>
<dbReference type="CDD" id="cd00077">
    <property type="entry name" value="HDc"/>
    <property type="match status" value="1"/>
</dbReference>
<dbReference type="Gene3D" id="1.10.3210.10">
    <property type="entry name" value="Hypothetical protein af1432"/>
    <property type="match status" value="1"/>
</dbReference>
<dbReference type="HAMAP" id="MF_01212">
    <property type="entry name" value="dGTPase_type2"/>
    <property type="match status" value="1"/>
</dbReference>
<dbReference type="InterPro" id="IPR006261">
    <property type="entry name" value="dGTPase"/>
</dbReference>
<dbReference type="InterPro" id="IPR050135">
    <property type="entry name" value="dGTPase-like"/>
</dbReference>
<dbReference type="InterPro" id="IPR023023">
    <property type="entry name" value="dNTPase_2"/>
</dbReference>
<dbReference type="InterPro" id="IPR003607">
    <property type="entry name" value="HD/PDEase_dom"/>
</dbReference>
<dbReference type="InterPro" id="IPR006674">
    <property type="entry name" value="HD_domain"/>
</dbReference>
<dbReference type="InterPro" id="IPR026875">
    <property type="entry name" value="PHydrolase_assoc_dom"/>
</dbReference>
<dbReference type="NCBIfam" id="TIGR01353">
    <property type="entry name" value="dGTP_triPase"/>
    <property type="match status" value="1"/>
</dbReference>
<dbReference type="NCBIfam" id="NF002326">
    <property type="entry name" value="PRK01286.1-1"/>
    <property type="match status" value="1"/>
</dbReference>
<dbReference type="NCBIfam" id="NF002328">
    <property type="entry name" value="PRK01286.1-3"/>
    <property type="match status" value="1"/>
</dbReference>
<dbReference type="PANTHER" id="PTHR11373:SF43">
    <property type="entry name" value="DEOXYGUANOSINETRIPHOSPHATE TRIPHOSPHOHYDROLASE-LIKE PROTEIN"/>
    <property type="match status" value="1"/>
</dbReference>
<dbReference type="PANTHER" id="PTHR11373">
    <property type="entry name" value="DEOXYNUCLEOSIDE TRIPHOSPHATE TRIPHOSPHOHYDROLASE"/>
    <property type="match status" value="1"/>
</dbReference>
<dbReference type="Pfam" id="PF01966">
    <property type="entry name" value="HD"/>
    <property type="match status" value="1"/>
</dbReference>
<dbReference type="Pfam" id="PF13286">
    <property type="entry name" value="HD_assoc"/>
    <property type="match status" value="1"/>
</dbReference>
<dbReference type="SMART" id="SM00471">
    <property type="entry name" value="HDc"/>
    <property type="match status" value="1"/>
</dbReference>
<dbReference type="SUPFAM" id="SSF109604">
    <property type="entry name" value="HD-domain/PDEase-like"/>
    <property type="match status" value="1"/>
</dbReference>
<dbReference type="PROSITE" id="PS51831">
    <property type="entry name" value="HD"/>
    <property type="match status" value="1"/>
</dbReference>
<feature type="chain" id="PRO_1000066434" description="Deoxyguanosinetriphosphate triphosphohydrolase-like protein">
    <location>
        <begin position="1"/>
        <end position="404"/>
    </location>
</feature>
<feature type="domain" description="HD" evidence="2">
    <location>
        <begin position="69"/>
        <end position="217"/>
    </location>
</feature>
<feature type="region of interest" description="Disordered" evidence="3">
    <location>
        <begin position="1"/>
        <end position="33"/>
    </location>
</feature>
<proteinExistence type="inferred from homology"/>
<comment type="similarity">
    <text evidence="1">Belongs to the dGTPase family. Type 2 subfamily.</text>
</comment>
<gene>
    <name type="ordered locus">RPB_2751</name>
</gene>
<accession>Q2IWF7</accession>
<sequence>MSVGMAAPRAAFSCDPDRSRGRQFAEPPSSNRSAFRRDCDRVIHSNAFRRLKHKTQVFVFHEGDHYRTRLTHSLEVAQIARAIARQLGLDEDLTETLALAHDLGHPPFGHAGERALDACLRDHGGFDHNAQTLRVLTALEHRYPGFDGLNLTWETLEGVVKHNGPLTDRTGAPLPRHAERGVPIGIAEFSQRFDLEIWSFASLEAQVAALADDIAYDAHDIDDGLRAGLFRVDDLRAVPLTAALIDGISRRYPALGESRRGAELVRELISHLIGAVTAETMRRLGEAAPRSVEDVRHASTAMVAFPSETAVAEAEIKAFLWTHMYRAERVMAVMRDAEAIVADLFRRYCEHPADLPPDWLPADGPVAECEADRFRRIRNFIAGMTDRYALTEHQRLFDSTPDLR</sequence>
<keyword id="KW-0378">Hydrolase</keyword>
<keyword id="KW-1185">Reference proteome</keyword>
<name>DGTL1_RHOP2</name>
<evidence type="ECO:0000255" key="1">
    <source>
        <dbReference type="HAMAP-Rule" id="MF_01212"/>
    </source>
</evidence>
<evidence type="ECO:0000255" key="2">
    <source>
        <dbReference type="PROSITE-ProRule" id="PRU01175"/>
    </source>
</evidence>
<evidence type="ECO:0000256" key="3">
    <source>
        <dbReference type="SAM" id="MobiDB-lite"/>
    </source>
</evidence>
<reference key="1">
    <citation type="submission" date="2006-01" db="EMBL/GenBank/DDBJ databases">
        <title>Complete sequence of Rhodopseudomonas palustris HaA2.</title>
        <authorList>
            <consortium name="US DOE Joint Genome Institute"/>
            <person name="Copeland A."/>
            <person name="Lucas S."/>
            <person name="Lapidus A."/>
            <person name="Barry K."/>
            <person name="Detter J.C."/>
            <person name="Glavina T."/>
            <person name="Hammon N."/>
            <person name="Israni S."/>
            <person name="Pitluck S."/>
            <person name="Chain P."/>
            <person name="Malfatti S."/>
            <person name="Shin M."/>
            <person name="Vergez L."/>
            <person name="Schmutz J."/>
            <person name="Larimer F."/>
            <person name="Land M."/>
            <person name="Hauser L."/>
            <person name="Pelletier D.A."/>
            <person name="Kyrpides N."/>
            <person name="Anderson I."/>
            <person name="Oda Y."/>
            <person name="Harwood C.S."/>
            <person name="Richardson P."/>
        </authorList>
    </citation>
    <scope>NUCLEOTIDE SEQUENCE [LARGE SCALE GENOMIC DNA]</scope>
    <source>
        <strain>HaA2</strain>
    </source>
</reference>
<protein>
    <recommendedName>
        <fullName evidence="1">Deoxyguanosinetriphosphate triphosphohydrolase-like protein</fullName>
    </recommendedName>
</protein>
<organism>
    <name type="scientific">Rhodopseudomonas palustris (strain HaA2)</name>
    <dbReference type="NCBI Taxonomy" id="316058"/>
    <lineage>
        <taxon>Bacteria</taxon>
        <taxon>Pseudomonadati</taxon>
        <taxon>Pseudomonadota</taxon>
        <taxon>Alphaproteobacteria</taxon>
        <taxon>Hyphomicrobiales</taxon>
        <taxon>Nitrobacteraceae</taxon>
        <taxon>Rhodopseudomonas</taxon>
    </lineage>
</organism>